<gene>
    <name evidence="1" type="primary">thiE</name>
    <name type="ordered locus">DR_A0174</name>
</gene>
<proteinExistence type="inferred from homology"/>
<reference key="1">
    <citation type="journal article" date="1999" name="Science">
        <title>Genome sequence of the radioresistant bacterium Deinococcus radiodurans R1.</title>
        <authorList>
            <person name="White O."/>
            <person name="Eisen J.A."/>
            <person name="Heidelberg J.F."/>
            <person name="Hickey E.K."/>
            <person name="Peterson J.D."/>
            <person name="Dodson R.J."/>
            <person name="Haft D.H."/>
            <person name="Gwinn M.L."/>
            <person name="Nelson W.C."/>
            <person name="Richardson D.L."/>
            <person name="Moffat K.S."/>
            <person name="Qin H."/>
            <person name="Jiang L."/>
            <person name="Pamphile W."/>
            <person name="Crosby M."/>
            <person name="Shen M."/>
            <person name="Vamathevan J.J."/>
            <person name="Lam P."/>
            <person name="McDonald L.A."/>
            <person name="Utterback T.R."/>
            <person name="Zalewski C."/>
            <person name="Makarova K.S."/>
            <person name="Aravind L."/>
            <person name="Daly M.J."/>
            <person name="Minton K.W."/>
            <person name="Fleischmann R.D."/>
            <person name="Ketchum K.A."/>
            <person name="Nelson K.E."/>
            <person name="Salzberg S.L."/>
            <person name="Smith H.O."/>
            <person name="Venter J.C."/>
            <person name="Fraser C.M."/>
        </authorList>
    </citation>
    <scope>NUCLEOTIDE SEQUENCE [LARGE SCALE GENOMIC DNA]</scope>
    <source>
        <strain>ATCC 13939 / DSM 20539 / JCM 16871 / CCUG 27074 / LMG 4051 / NBRC 15346 / NCIMB 9279 / VKM B-1422 / R1</strain>
    </source>
</reference>
<name>THIE_DEIRA</name>
<keyword id="KW-0460">Magnesium</keyword>
<keyword id="KW-0479">Metal-binding</keyword>
<keyword id="KW-1185">Reference proteome</keyword>
<keyword id="KW-0784">Thiamine biosynthesis</keyword>
<keyword id="KW-0808">Transferase</keyword>
<organism>
    <name type="scientific">Deinococcus radiodurans (strain ATCC 13939 / DSM 20539 / JCM 16871 / CCUG 27074 / LMG 4051 / NBRC 15346 / NCIMB 9279 / VKM B-1422 / R1)</name>
    <dbReference type="NCBI Taxonomy" id="243230"/>
    <lineage>
        <taxon>Bacteria</taxon>
        <taxon>Thermotogati</taxon>
        <taxon>Deinococcota</taxon>
        <taxon>Deinococci</taxon>
        <taxon>Deinococcales</taxon>
        <taxon>Deinococcaceae</taxon>
        <taxon>Deinococcus</taxon>
    </lineage>
</organism>
<accession>Q9RYX9</accession>
<comment type="function">
    <text evidence="1">Condenses 4-methyl-5-(beta-hydroxyethyl)thiazole monophosphate (THZ-P) and 2-methyl-4-amino-5-hydroxymethyl pyrimidine pyrophosphate (HMP-PP) to form thiamine monophosphate (TMP).</text>
</comment>
<comment type="catalytic activity">
    <reaction evidence="1">
        <text>2-[(2R,5Z)-2-carboxy-4-methylthiazol-5(2H)-ylidene]ethyl phosphate + 4-amino-2-methyl-5-(diphosphooxymethyl)pyrimidine + 2 H(+) = thiamine phosphate + CO2 + diphosphate</text>
        <dbReference type="Rhea" id="RHEA:47844"/>
        <dbReference type="ChEBI" id="CHEBI:15378"/>
        <dbReference type="ChEBI" id="CHEBI:16526"/>
        <dbReference type="ChEBI" id="CHEBI:33019"/>
        <dbReference type="ChEBI" id="CHEBI:37575"/>
        <dbReference type="ChEBI" id="CHEBI:57841"/>
        <dbReference type="ChEBI" id="CHEBI:62899"/>
        <dbReference type="EC" id="2.5.1.3"/>
    </reaction>
</comment>
<comment type="catalytic activity">
    <reaction evidence="1">
        <text>2-(2-carboxy-4-methylthiazol-5-yl)ethyl phosphate + 4-amino-2-methyl-5-(diphosphooxymethyl)pyrimidine + 2 H(+) = thiamine phosphate + CO2 + diphosphate</text>
        <dbReference type="Rhea" id="RHEA:47848"/>
        <dbReference type="ChEBI" id="CHEBI:15378"/>
        <dbReference type="ChEBI" id="CHEBI:16526"/>
        <dbReference type="ChEBI" id="CHEBI:33019"/>
        <dbReference type="ChEBI" id="CHEBI:37575"/>
        <dbReference type="ChEBI" id="CHEBI:57841"/>
        <dbReference type="ChEBI" id="CHEBI:62890"/>
        <dbReference type="EC" id="2.5.1.3"/>
    </reaction>
</comment>
<comment type="catalytic activity">
    <reaction evidence="1">
        <text>4-methyl-5-(2-phosphooxyethyl)-thiazole + 4-amino-2-methyl-5-(diphosphooxymethyl)pyrimidine + H(+) = thiamine phosphate + diphosphate</text>
        <dbReference type="Rhea" id="RHEA:22328"/>
        <dbReference type="ChEBI" id="CHEBI:15378"/>
        <dbReference type="ChEBI" id="CHEBI:33019"/>
        <dbReference type="ChEBI" id="CHEBI:37575"/>
        <dbReference type="ChEBI" id="CHEBI:57841"/>
        <dbReference type="ChEBI" id="CHEBI:58296"/>
        <dbReference type="EC" id="2.5.1.3"/>
    </reaction>
</comment>
<comment type="cofactor">
    <cofactor evidence="1">
        <name>Mg(2+)</name>
        <dbReference type="ChEBI" id="CHEBI:18420"/>
    </cofactor>
    <text evidence="1">Binds 1 Mg(2+) ion per subunit.</text>
</comment>
<comment type="pathway">
    <text evidence="1">Cofactor biosynthesis; thiamine diphosphate biosynthesis; thiamine phosphate from 4-amino-2-methyl-5-diphosphomethylpyrimidine and 4-methyl-5-(2-phosphoethyl)-thiazole: step 1/1.</text>
</comment>
<comment type="similarity">
    <text evidence="1">Belongs to the thiamine-phosphate synthase family.</text>
</comment>
<dbReference type="EC" id="2.5.1.3" evidence="1"/>
<dbReference type="EMBL" id="AE001825">
    <property type="protein sequence ID" value="AAF12197.1"/>
    <property type="molecule type" value="Genomic_DNA"/>
</dbReference>
<dbReference type="PIR" id="A75614">
    <property type="entry name" value="A75614"/>
</dbReference>
<dbReference type="RefSeq" id="NP_285498.1">
    <property type="nucleotide sequence ID" value="NC_001264.1"/>
</dbReference>
<dbReference type="SMR" id="Q9RYX9"/>
<dbReference type="FunCoup" id="Q9RYX9">
    <property type="interactions" value="338"/>
</dbReference>
<dbReference type="STRING" id="243230.DR_A0174"/>
<dbReference type="PaxDb" id="243230-DR_A0174"/>
<dbReference type="EnsemblBacteria" id="AAF12197">
    <property type="protein sequence ID" value="AAF12197"/>
    <property type="gene ID" value="DR_A0174"/>
</dbReference>
<dbReference type="KEGG" id="dra:DR_A0174"/>
<dbReference type="PATRIC" id="fig|243230.17.peg.3062"/>
<dbReference type="eggNOG" id="COG0352">
    <property type="taxonomic scope" value="Bacteria"/>
</dbReference>
<dbReference type="HOGENOM" id="CLU_018272_3_2_0"/>
<dbReference type="InParanoid" id="Q9RYX9"/>
<dbReference type="OrthoDB" id="9812206at2"/>
<dbReference type="UniPathway" id="UPA00060">
    <property type="reaction ID" value="UER00141"/>
</dbReference>
<dbReference type="Proteomes" id="UP000002524">
    <property type="component" value="Chromosome 2"/>
</dbReference>
<dbReference type="GO" id="GO:0005737">
    <property type="term" value="C:cytoplasm"/>
    <property type="evidence" value="ECO:0000318"/>
    <property type="project" value="GO_Central"/>
</dbReference>
<dbReference type="GO" id="GO:0000287">
    <property type="term" value="F:magnesium ion binding"/>
    <property type="evidence" value="ECO:0007669"/>
    <property type="project" value="UniProtKB-UniRule"/>
</dbReference>
<dbReference type="GO" id="GO:0004789">
    <property type="term" value="F:thiamine-phosphate diphosphorylase activity"/>
    <property type="evidence" value="ECO:0000318"/>
    <property type="project" value="GO_Central"/>
</dbReference>
<dbReference type="GO" id="GO:0009228">
    <property type="term" value="P:thiamine biosynthetic process"/>
    <property type="evidence" value="ECO:0000318"/>
    <property type="project" value="GO_Central"/>
</dbReference>
<dbReference type="GO" id="GO:0009229">
    <property type="term" value="P:thiamine diphosphate biosynthetic process"/>
    <property type="evidence" value="ECO:0007669"/>
    <property type="project" value="UniProtKB-UniRule"/>
</dbReference>
<dbReference type="CDD" id="cd00564">
    <property type="entry name" value="TMP_TenI"/>
    <property type="match status" value="1"/>
</dbReference>
<dbReference type="FunFam" id="3.20.20.70:FF:000178">
    <property type="entry name" value="Thiamine-phosphate synthase"/>
    <property type="match status" value="1"/>
</dbReference>
<dbReference type="Gene3D" id="3.20.20.70">
    <property type="entry name" value="Aldolase class I"/>
    <property type="match status" value="1"/>
</dbReference>
<dbReference type="HAMAP" id="MF_00097">
    <property type="entry name" value="TMP_synthase"/>
    <property type="match status" value="1"/>
</dbReference>
<dbReference type="InterPro" id="IPR013785">
    <property type="entry name" value="Aldolase_TIM"/>
</dbReference>
<dbReference type="InterPro" id="IPR036206">
    <property type="entry name" value="ThiamineP_synth_sf"/>
</dbReference>
<dbReference type="InterPro" id="IPR022998">
    <property type="entry name" value="ThiamineP_synth_TenI"/>
</dbReference>
<dbReference type="InterPro" id="IPR034291">
    <property type="entry name" value="TMP_synthase"/>
</dbReference>
<dbReference type="NCBIfam" id="TIGR00693">
    <property type="entry name" value="thiE"/>
    <property type="match status" value="1"/>
</dbReference>
<dbReference type="PANTHER" id="PTHR20857">
    <property type="entry name" value="THIAMINE-PHOSPHATE PYROPHOSPHORYLASE"/>
    <property type="match status" value="1"/>
</dbReference>
<dbReference type="PANTHER" id="PTHR20857:SF15">
    <property type="entry name" value="THIAMINE-PHOSPHATE SYNTHASE"/>
    <property type="match status" value="1"/>
</dbReference>
<dbReference type="Pfam" id="PF02581">
    <property type="entry name" value="TMP-TENI"/>
    <property type="match status" value="1"/>
</dbReference>
<dbReference type="SUPFAM" id="SSF51391">
    <property type="entry name" value="Thiamin phosphate synthase"/>
    <property type="match status" value="1"/>
</dbReference>
<feature type="chain" id="PRO_0000157009" description="Thiamine-phosphate synthase">
    <location>
        <begin position="1"/>
        <end position="280"/>
    </location>
</feature>
<feature type="region of interest" description="Disordered" evidence="2">
    <location>
        <begin position="1"/>
        <end position="64"/>
    </location>
</feature>
<feature type="compositionally biased region" description="Basic and acidic residues" evidence="2">
    <location>
        <begin position="42"/>
        <end position="55"/>
    </location>
</feature>
<feature type="binding site" evidence="1">
    <location>
        <begin position="104"/>
        <end position="108"/>
    </location>
    <ligand>
        <name>4-amino-2-methyl-5-(diphosphooxymethyl)pyrimidine</name>
        <dbReference type="ChEBI" id="CHEBI:57841"/>
    </ligand>
</feature>
<feature type="binding site" evidence="1">
    <location>
        <position position="141"/>
    </location>
    <ligand>
        <name>4-amino-2-methyl-5-(diphosphooxymethyl)pyrimidine</name>
        <dbReference type="ChEBI" id="CHEBI:57841"/>
    </ligand>
</feature>
<feature type="binding site" evidence="1">
    <location>
        <position position="142"/>
    </location>
    <ligand>
        <name>Mg(2+)</name>
        <dbReference type="ChEBI" id="CHEBI:18420"/>
    </ligand>
</feature>
<feature type="binding site" evidence="1">
    <location>
        <position position="161"/>
    </location>
    <ligand>
        <name>Mg(2+)</name>
        <dbReference type="ChEBI" id="CHEBI:18420"/>
    </ligand>
</feature>
<feature type="binding site" evidence="1">
    <location>
        <position position="179"/>
    </location>
    <ligand>
        <name>4-amino-2-methyl-5-(diphosphooxymethyl)pyrimidine</name>
        <dbReference type="ChEBI" id="CHEBI:57841"/>
    </ligand>
</feature>
<feature type="binding site" evidence="1">
    <location>
        <begin position="205"/>
        <end position="207"/>
    </location>
    <ligand>
        <name>2-[(2R,5Z)-2-carboxy-4-methylthiazol-5(2H)-ylidene]ethyl phosphate</name>
        <dbReference type="ChEBI" id="CHEBI:62899"/>
    </ligand>
</feature>
<feature type="binding site" evidence="1">
    <location>
        <position position="208"/>
    </location>
    <ligand>
        <name>4-amino-2-methyl-5-(diphosphooxymethyl)pyrimidine</name>
        <dbReference type="ChEBI" id="CHEBI:57841"/>
    </ligand>
</feature>
<feature type="binding site" evidence="1">
    <location>
        <position position="236"/>
    </location>
    <ligand>
        <name>2-[(2R,5Z)-2-carboxy-4-methylthiazol-5(2H)-ylidene]ethyl phosphate</name>
        <dbReference type="ChEBI" id="CHEBI:62899"/>
    </ligand>
</feature>
<evidence type="ECO:0000255" key="1">
    <source>
        <dbReference type="HAMAP-Rule" id="MF_00097"/>
    </source>
</evidence>
<evidence type="ECO:0000256" key="2">
    <source>
        <dbReference type="SAM" id="MobiDB-lite"/>
    </source>
</evidence>
<sequence>MGWSGSPLTLPPLRGSPPLPQVERDRTQPQLLAFADAFPSEGRGELRSRERRGEATGRGGLRMTAPTRPLGHLYLVATPRPGQSEAEFLRRVEDALAGGVDTLQLRCKADSGQYGEARPYIALAERLRDLAHARNVPFFVNDRVDVALAAGADGVHLGQNDLPVEWARLMAPGLRVGRSTHRPEDAARALAEAPAYFATGPVHATPTKPGRVAAGLGYVRHIAALRPTLPWYAIGGIDLGNVQAVLDAGATRIAVVRAVLDADDCAAAAHALREALMVNG</sequence>
<protein>
    <recommendedName>
        <fullName evidence="1">Thiamine-phosphate synthase</fullName>
        <shortName evidence="1">TP synthase</shortName>
        <shortName evidence="1">TPS</shortName>
        <ecNumber evidence="1">2.5.1.3</ecNumber>
    </recommendedName>
    <alternativeName>
        <fullName evidence="1">Thiamine-phosphate pyrophosphorylase</fullName>
        <shortName evidence="1">TMP pyrophosphorylase</shortName>
        <shortName evidence="1">TMP-PPase</shortName>
    </alternativeName>
</protein>